<gene>
    <name type="primary">DUS3</name>
    <name type="ordered locus">KLLA0B03069g</name>
</gene>
<sequence length="665" mass="76424">MDPSQPQVKRPASSDEQPSAKKTDTATSKGIAHLKPEFILFNDQNGSSRPMAGEYNDEEESTSSRLESQPANQIKGKKQNSKKKRGQNKNRDNRQVREQHALCSKFVTNVDATCSFDTKCRYVHDVREYLSKKAPEIKTEFFPICPVWQSLGHCPMGYKCCFLSSHCNMETLELKDLYEVDERKKLYEANHEINHIDGERKYDLIKRRFSFTKSDYILEIIDAMQQENRDLMNTSKGSETTTDANAGEDANDEKVSFQATEKQNQLTEKRERQRELYLKYHDTRFFAQEKRKLDLHHKKIVSPLTTVGNLPYRRLMRKLGADVTYSEMALAVPLIQGTNSEWALPKAHCSEFPGFGVQIACSKTWQAAKAAEALAANVTGVSEINLNSGCPIDLLYRQGSGSALLDNPARMIRCLNGMNYVSNDIPVTVKIRTGTREGHPIALSITKRLVLETDVAAITLHGRTRQQRYTKSADWDYVGEVANAVRTYEAERQENKNLRDGQKIQFVGNGDCNNWEDWYKHLENKNMDSVMVARGALIKPWIFEEVDAQQYMDKSSKERLEILKDYCKFAMDHWGTDQYGISQCRRFFCEFMSFFHRYVPMGICERYPVLLNERPPNWKGRDDLETLLGSTDSNDWLKLSEMFFGKVNDEFVFTPKHKSNSFATN</sequence>
<feature type="chain" id="PRO_0000330240" description="tRNA-dihydrouridine(47) synthase [NAD(P)(+)]">
    <location>
        <begin position="1"/>
        <end position="665"/>
    </location>
</feature>
<feature type="zinc finger region" description="C3H1-type 1" evidence="4">
    <location>
        <begin position="97"/>
        <end position="127"/>
    </location>
</feature>
<feature type="zinc finger region" description="C3H1-type 2" evidence="4">
    <location>
        <begin position="139"/>
        <end position="169"/>
    </location>
</feature>
<feature type="region of interest" description="Disordered" evidence="5">
    <location>
        <begin position="1"/>
        <end position="97"/>
    </location>
</feature>
<feature type="region of interest" description="Disordered" evidence="5">
    <location>
        <begin position="233"/>
        <end position="268"/>
    </location>
</feature>
<feature type="compositionally biased region" description="Polar residues" evidence="5">
    <location>
        <begin position="63"/>
        <end position="72"/>
    </location>
</feature>
<feature type="compositionally biased region" description="Basic residues" evidence="5">
    <location>
        <begin position="75"/>
        <end position="88"/>
    </location>
</feature>
<feature type="compositionally biased region" description="Polar residues" evidence="5">
    <location>
        <begin position="233"/>
        <end position="244"/>
    </location>
</feature>
<feature type="compositionally biased region" description="Polar residues" evidence="5">
    <location>
        <begin position="257"/>
        <end position="266"/>
    </location>
</feature>
<feature type="active site" description="Proton donor" evidence="2">
    <location>
        <position position="390"/>
    </location>
</feature>
<feature type="binding site" evidence="2">
    <location>
        <begin position="303"/>
        <end position="305"/>
    </location>
    <ligand>
        <name>FMN</name>
        <dbReference type="ChEBI" id="CHEBI:58210"/>
    </ligand>
</feature>
<feature type="binding site" evidence="2">
    <location>
        <position position="358"/>
    </location>
    <ligand>
        <name>FMN</name>
        <dbReference type="ChEBI" id="CHEBI:58210"/>
    </ligand>
</feature>
<feature type="binding site" evidence="2">
    <location>
        <position position="430"/>
    </location>
    <ligand>
        <name>FMN</name>
        <dbReference type="ChEBI" id="CHEBI:58210"/>
    </ligand>
</feature>
<feature type="binding site" evidence="2">
    <location>
        <position position="461"/>
    </location>
    <ligand>
        <name>FMN</name>
        <dbReference type="ChEBI" id="CHEBI:58210"/>
    </ligand>
</feature>
<feature type="binding site" evidence="2">
    <location>
        <begin position="509"/>
        <end position="511"/>
    </location>
    <ligand>
        <name>FMN</name>
        <dbReference type="ChEBI" id="CHEBI:58210"/>
    </ligand>
</feature>
<feature type="binding site" evidence="2">
    <location>
        <begin position="533"/>
        <end position="534"/>
    </location>
    <ligand>
        <name>FMN</name>
        <dbReference type="ChEBI" id="CHEBI:58210"/>
    </ligand>
</feature>
<reference key="1">
    <citation type="journal article" date="2004" name="Nature">
        <title>Genome evolution in yeasts.</title>
        <authorList>
            <person name="Dujon B."/>
            <person name="Sherman D."/>
            <person name="Fischer G."/>
            <person name="Durrens P."/>
            <person name="Casaregola S."/>
            <person name="Lafontaine I."/>
            <person name="de Montigny J."/>
            <person name="Marck C."/>
            <person name="Neuveglise C."/>
            <person name="Talla E."/>
            <person name="Goffard N."/>
            <person name="Frangeul L."/>
            <person name="Aigle M."/>
            <person name="Anthouard V."/>
            <person name="Babour A."/>
            <person name="Barbe V."/>
            <person name="Barnay S."/>
            <person name="Blanchin S."/>
            <person name="Beckerich J.-M."/>
            <person name="Beyne E."/>
            <person name="Bleykasten C."/>
            <person name="Boisrame A."/>
            <person name="Boyer J."/>
            <person name="Cattolico L."/>
            <person name="Confanioleri F."/>
            <person name="de Daruvar A."/>
            <person name="Despons L."/>
            <person name="Fabre E."/>
            <person name="Fairhead C."/>
            <person name="Ferry-Dumazet H."/>
            <person name="Groppi A."/>
            <person name="Hantraye F."/>
            <person name="Hennequin C."/>
            <person name="Jauniaux N."/>
            <person name="Joyet P."/>
            <person name="Kachouri R."/>
            <person name="Kerrest A."/>
            <person name="Koszul R."/>
            <person name="Lemaire M."/>
            <person name="Lesur I."/>
            <person name="Ma L."/>
            <person name="Muller H."/>
            <person name="Nicaud J.-M."/>
            <person name="Nikolski M."/>
            <person name="Oztas S."/>
            <person name="Ozier-Kalogeropoulos O."/>
            <person name="Pellenz S."/>
            <person name="Potier S."/>
            <person name="Richard G.-F."/>
            <person name="Straub M.-L."/>
            <person name="Suleau A."/>
            <person name="Swennen D."/>
            <person name="Tekaia F."/>
            <person name="Wesolowski-Louvel M."/>
            <person name="Westhof E."/>
            <person name="Wirth B."/>
            <person name="Zeniou-Meyer M."/>
            <person name="Zivanovic Y."/>
            <person name="Bolotin-Fukuhara M."/>
            <person name="Thierry A."/>
            <person name="Bouchier C."/>
            <person name="Caudron B."/>
            <person name="Scarpelli C."/>
            <person name="Gaillardin C."/>
            <person name="Weissenbach J."/>
            <person name="Wincker P."/>
            <person name="Souciet J.-L."/>
        </authorList>
    </citation>
    <scope>NUCLEOTIDE SEQUENCE [LARGE SCALE GENOMIC DNA]</scope>
    <source>
        <strain>ATCC 8585 / CBS 2359 / DSM 70799 / NBRC 1267 / NRRL Y-1140 / WM37</strain>
    </source>
</reference>
<evidence type="ECO:0000250" key="1">
    <source>
        <dbReference type="UniProtKB" id="Q06053"/>
    </source>
</evidence>
<evidence type="ECO:0000250" key="2">
    <source>
        <dbReference type="UniProtKB" id="Q5SMC7"/>
    </source>
</evidence>
<evidence type="ECO:0000250" key="3">
    <source>
        <dbReference type="UniProtKB" id="Q9UTH9"/>
    </source>
</evidence>
<evidence type="ECO:0000255" key="4">
    <source>
        <dbReference type="PROSITE-ProRule" id="PRU00723"/>
    </source>
</evidence>
<evidence type="ECO:0000256" key="5">
    <source>
        <dbReference type="SAM" id="MobiDB-lite"/>
    </source>
</evidence>
<evidence type="ECO:0000305" key="6"/>
<dbReference type="EC" id="1.3.1.89" evidence="1"/>
<dbReference type="EC" id="1.3.1.-" evidence="3"/>
<dbReference type="EMBL" id="CR382122">
    <property type="protein sequence ID" value="CAH02062.1"/>
    <property type="molecule type" value="Genomic_DNA"/>
</dbReference>
<dbReference type="RefSeq" id="XP_451669.1">
    <property type="nucleotide sequence ID" value="XM_451669.1"/>
</dbReference>
<dbReference type="SMR" id="Q6CWM0"/>
<dbReference type="FunCoup" id="Q6CWM0">
    <property type="interactions" value="937"/>
</dbReference>
<dbReference type="STRING" id="284590.Q6CWM0"/>
<dbReference type="PaxDb" id="284590-Q6CWM0"/>
<dbReference type="KEGG" id="kla:KLLA0_B03069g"/>
<dbReference type="eggNOG" id="KOG2333">
    <property type="taxonomic scope" value="Eukaryota"/>
</dbReference>
<dbReference type="HOGENOM" id="CLU_013299_7_0_1"/>
<dbReference type="InParanoid" id="Q6CWM0"/>
<dbReference type="OMA" id="WSYIAEC"/>
<dbReference type="Proteomes" id="UP000000598">
    <property type="component" value="Chromosome B"/>
</dbReference>
<dbReference type="GO" id="GO:0005737">
    <property type="term" value="C:cytoplasm"/>
    <property type="evidence" value="ECO:0007669"/>
    <property type="project" value="UniProtKB-SubCell"/>
</dbReference>
<dbReference type="GO" id="GO:0005634">
    <property type="term" value="C:nucleus"/>
    <property type="evidence" value="ECO:0007669"/>
    <property type="project" value="UniProtKB-SubCell"/>
</dbReference>
<dbReference type="GO" id="GO:0050660">
    <property type="term" value="F:flavin adenine dinucleotide binding"/>
    <property type="evidence" value="ECO:0007669"/>
    <property type="project" value="InterPro"/>
</dbReference>
<dbReference type="GO" id="GO:0106414">
    <property type="term" value="F:mRNA dihydrouridine synthase activity"/>
    <property type="evidence" value="ECO:0007669"/>
    <property type="project" value="RHEA"/>
</dbReference>
<dbReference type="GO" id="GO:0003723">
    <property type="term" value="F:RNA binding"/>
    <property type="evidence" value="ECO:0007669"/>
    <property type="project" value="TreeGrafter"/>
</dbReference>
<dbReference type="GO" id="GO:0102265">
    <property type="term" value="F:tRNA-dihydrouridine47 synthase activity"/>
    <property type="evidence" value="ECO:0007669"/>
    <property type="project" value="UniProtKB-EC"/>
</dbReference>
<dbReference type="GO" id="GO:0008270">
    <property type="term" value="F:zinc ion binding"/>
    <property type="evidence" value="ECO:0007669"/>
    <property type="project" value="UniProtKB-KW"/>
</dbReference>
<dbReference type="GO" id="GO:0006397">
    <property type="term" value="P:mRNA processing"/>
    <property type="evidence" value="ECO:0007669"/>
    <property type="project" value="UniProtKB-KW"/>
</dbReference>
<dbReference type="CDD" id="cd02801">
    <property type="entry name" value="DUS_like_FMN"/>
    <property type="match status" value="1"/>
</dbReference>
<dbReference type="FunFam" id="3.20.20.70:FF:000145">
    <property type="entry name" value="tRNA-dihydrouridine(47) synthase [NAD(P)(+)]"/>
    <property type="match status" value="1"/>
</dbReference>
<dbReference type="Gene3D" id="3.20.20.70">
    <property type="entry name" value="Aldolase class I"/>
    <property type="match status" value="1"/>
</dbReference>
<dbReference type="InterPro" id="IPR013785">
    <property type="entry name" value="Aldolase_TIM"/>
</dbReference>
<dbReference type="InterPro" id="IPR035587">
    <property type="entry name" value="DUS-like_FMN-bd"/>
</dbReference>
<dbReference type="InterPro" id="IPR018517">
    <property type="entry name" value="tRNA_hU_synthase_CS"/>
</dbReference>
<dbReference type="InterPro" id="IPR000571">
    <property type="entry name" value="Znf_CCCH"/>
</dbReference>
<dbReference type="PANTHER" id="PTHR45846">
    <property type="entry name" value="TRNA-DIHYDROURIDINE(47) SYNTHASE [NAD(P)(+)]-LIKE"/>
    <property type="match status" value="1"/>
</dbReference>
<dbReference type="PANTHER" id="PTHR45846:SF1">
    <property type="entry name" value="TRNA-DIHYDROURIDINE(47) SYNTHASE [NAD(P)(+)]-LIKE"/>
    <property type="match status" value="1"/>
</dbReference>
<dbReference type="Pfam" id="PF01207">
    <property type="entry name" value="Dus"/>
    <property type="match status" value="1"/>
</dbReference>
<dbReference type="SUPFAM" id="SSF51395">
    <property type="entry name" value="FMN-linked oxidoreductases"/>
    <property type="match status" value="1"/>
</dbReference>
<dbReference type="PROSITE" id="PS01136">
    <property type="entry name" value="UPF0034"/>
    <property type="match status" value="1"/>
</dbReference>
<dbReference type="PROSITE" id="PS50103">
    <property type="entry name" value="ZF_C3H1"/>
    <property type="match status" value="2"/>
</dbReference>
<organism>
    <name type="scientific">Kluyveromyces lactis (strain ATCC 8585 / CBS 2359 / DSM 70799 / NBRC 1267 / NRRL Y-1140 / WM37)</name>
    <name type="common">Yeast</name>
    <name type="synonym">Candida sphaerica</name>
    <dbReference type="NCBI Taxonomy" id="284590"/>
    <lineage>
        <taxon>Eukaryota</taxon>
        <taxon>Fungi</taxon>
        <taxon>Dikarya</taxon>
        <taxon>Ascomycota</taxon>
        <taxon>Saccharomycotina</taxon>
        <taxon>Saccharomycetes</taxon>
        <taxon>Saccharomycetales</taxon>
        <taxon>Saccharomycetaceae</taxon>
        <taxon>Kluyveromyces</taxon>
    </lineage>
</organism>
<comment type="function">
    <text evidence="1 3">Catalyzes the synthesis of dihydrouridine, a modified base found in the D-loop of most tRNAs. Specifically modifies U47 in cytoplasmic tRNAs (By similarity). Catalyzes the synthesis of dihydrouridine in some mRNAs, thereby affecting their translation (By similarity).</text>
</comment>
<comment type="catalytic activity">
    <reaction evidence="1">
        <text>5,6-dihydrouridine(47) in tRNA + NAD(+) = uridine(47) in tRNA + NADH + H(+)</text>
        <dbReference type="Rhea" id="RHEA:53364"/>
        <dbReference type="Rhea" id="RHEA-COMP:13539"/>
        <dbReference type="Rhea" id="RHEA-COMP:13540"/>
        <dbReference type="ChEBI" id="CHEBI:15378"/>
        <dbReference type="ChEBI" id="CHEBI:57540"/>
        <dbReference type="ChEBI" id="CHEBI:57945"/>
        <dbReference type="ChEBI" id="CHEBI:65315"/>
        <dbReference type="ChEBI" id="CHEBI:74443"/>
        <dbReference type="EC" id="1.3.1.89"/>
    </reaction>
    <physiologicalReaction direction="right-to-left" evidence="1">
        <dbReference type="Rhea" id="RHEA:53366"/>
    </physiologicalReaction>
</comment>
<comment type="catalytic activity">
    <reaction evidence="1">
        <text>5,6-dihydrouridine(47) in tRNA + NADP(+) = uridine(47) in tRNA + NADPH + H(+)</text>
        <dbReference type="Rhea" id="RHEA:53360"/>
        <dbReference type="Rhea" id="RHEA-COMP:13539"/>
        <dbReference type="Rhea" id="RHEA-COMP:13540"/>
        <dbReference type="ChEBI" id="CHEBI:15378"/>
        <dbReference type="ChEBI" id="CHEBI:57783"/>
        <dbReference type="ChEBI" id="CHEBI:58349"/>
        <dbReference type="ChEBI" id="CHEBI:65315"/>
        <dbReference type="ChEBI" id="CHEBI:74443"/>
        <dbReference type="EC" id="1.3.1.89"/>
    </reaction>
    <physiologicalReaction direction="right-to-left" evidence="1">
        <dbReference type="Rhea" id="RHEA:53362"/>
    </physiologicalReaction>
</comment>
<comment type="catalytic activity">
    <reaction evidence="3">
        <text>a 5,6-dihydrouridine in mRNA + NAD(+) = a uridine in mRNA + NADH + H(+)</text>
        <dbReference type="Rhea" id="RHEA:69851"/>
        <dbReference type="Rhea" id="RHEA-COMP:14658"/>
        <dbReference type="Rhea" id="RHEA-COMP:17789"/>
        <dbReference type="ChEBI" id="CHEBI:15378"/>
        <dbReference type="ChEBI" id="CHEBI:57540"/>
        <dbReference type="ChEBI" id="CHEBI:57945"/>
        <dbReference type="ChEBI" id="CHEBI:65315"/>
        <dbReference type="ChEBI" id="CHEBI:74443"/>
    </reaction>
    <physiologicalReaction direction="right-to-left" evidence="3">
        <dbReference type="Rhea" id="RHEA:69853"/>
    </physiologicalReaction>
</comment>
<comment type="catalytic activity">
    <reaction evidence="3">
        <text>a 5,6-dihydrouridine in mRNA + NADP(+) = a uridine in mRNA + NADPH + H(+)</text>
        <dbReference type="Rhea" id="RHEA:69855"/>
        <dbReference type="Rhea" id="RHEA-COMP:14658"/>
        <dbReference type="Rhea" id="RHEA-COMP:17789"/>
        <dbReference type="ChEBI" id="CHEBI:15378"/>
        <dbReference type="ChEBI" id="CHEBI:57783"/>
        <dbReference type="ChEBI" id="CHEBI:58349"/>
        <dbReference type="ChEBI" id="CHEBI:65315"/>
        <dbReference type="ChEBI" id="CHEBI:74443"/>
    </reaction>
    <physiologicalReaction direction="right-to-left" evidence="3">
        <dbReference type="Rhea" id="RHEA:69857"/>
    </physiologicalReaction>
</comment>
<comment type="cofactor">
    <cofactor evidence="2">
        <name>FMN</name>
        <dbReference type="ChEBI" id="CHEBI:58210"/>
    </cofactor>
</comment>
<comment type="subcellular location">
    <subcellularLocation>
        <location evidence="1">Cytoplasm</location>
    </subcellularLocation>
    <subcellularLocation>
        <location evidence="1">Nucleus</location>
    </subcellularLocation>
</comment>
<comment type="similarity">
    <text evidence="6">Belongs to the Dus family. Dus3 subfamily.</text>
</comment>
<name>DUS3_KLULA</name>
<proteinExistence type="inferred from homology"/>
<accession>Q6CWM0</accession>
<protein>
    <recommendedName>
        <fullName>tRNA-dihydrouridine(47) synthase [NAD(P)(+)]</fullName>
        <ecNumber evidence="1">1.3.1.89</ecNumber>
    </recommendedName>
    <alternativeName>
        <fullName>mRNA-dihydrouridine synthase DUS3</fullName>
        <ecNumber evidence="3">1.3.1.-</ecNumber>
    </alternativeName>
    <alternativeName>
        <fullName>tRNA-dihydrouridine synthase 3</fullName>
    </alternativeName>
</protein>
<keyword id="KW-0963">Cytoplasm</keyword>
<keyword id="KW-0285">Flavoprotein</keyword>
<keyword id="KW-0288">FMN</keyword>
<keyword id="KW-0479">Metal-binding</keyword>
<keyword id="KW-0507">mRNA processing</keyword>
<keyword id="KW-0520">NAD</keyword>
<keyword id="KW-0521">NADP</keyword>
<keyword id="KW-0539">Nucleus</keyword>
<keyword id="KW-0560">Oxidoreductase</keyword>
<keyword id="KW-1185">Reference proteome</keyword>
<keyword id="KW-0677">Repeat</keyword>
<keyword id="KW-0819">tRNA processing</keyword>
<keyword id="KW-0862">Zinc</keyword>
<keyword id="KW-0863">Zinc-finger</keyword>